<feature type="propeptide" id="PRO_0000397294" description="Removed in mature form; by autocatalysis" evidence="1">
    <location>
        <begin position="1"/>
        <end position="35"/>
    </location>
</feature>
<feature type="chain" id="PRO_0000397295" description="Proteasome subunit beta 2">
    <location>
        <begin position="36"/>
        <end position="230"/>
    </location>
</feature>
<feature type="region of interest" description="Disordered" evidence="2">
    <location>
        <begin position="1"/>
        <end position="29"/>
    </location>
</feature>
<feature type="compositionally biased region" description="Basic and acidic residues" evidence="2">
    <location>
        <begin position="1"/>
        <end position="10"/>
    </location>
</feature>
<feature type="active site" description="Nucleophile" evidence="1">
    <location>
        <position position="36"/>
    </location>
</feature>
<keyword id="KW-0068">Autocatalytic cleavage</keyword>
<keyword id="KW-0963">Cytoplasm</keyword>
<keyword id="KW-0378">Hydrolase</keyword>
<keyword id="KW-0645">Protease</keyword>
<keyword id="KW-0647">Proteasome</keyword>
<keyword id="KW-1185">Reference proteome</keyword>
<keyword id="KW-0888">Threonine protease</keyword>
<keyword id="KW-0865">Zymogen</keyword>
<protein>
    <recommendedName>
        <fullName evidence="1">Proteasome subunit beta 2</fullName>
        <ecNumber evidence="1">3.4.25.1</ecNumber>
    </recommendedName>
    <alternativeName>
        <fullName evidence="1">20S proteasome beta subunit 2</fullName>
    </alternativeName>
    <alternativeName>
        <fullName evidence="1">Proteasome core protein PsmB 2</fullName>
    </alternativeName>
</protein>
<dbReference type="EC" id="3.4.25.1" evidence="1"/>
<dbReference type="EMBL" id="AY596297">
    <property type="protein sequence ID" value="AAV46667.1"/>
    <property type="molecule type" value="Genomic_DNA"/>
</dbReference>
<dbReference type="RefSeq" id="WP_011223831.1">
    <property type="nucleotide sequence ID" value="NC_006396.1"/>
</dbReference>
<dbReference type="SMR" id="Q5V1D5"/>
<dbReference type="STRING" id="272569.rrnAC1772"/>
<dbReference type="MEROPS" id="T01.002"/>
<dbReference type="PaxDb" id="272569-rrnAC1772"/>
<dbReference type="EnsemblBacteria" id="AAV46667">
    <property type="protein sequence ID" value="AAV46667"/>
    <property type="gene ID" value="rrnAC1772"/>
</dbReference>
<dbReference type="GeneID" id="40152720"/>
<dbReference type="KEGG" id="hma:rrnAC1772"/>
<dbReference type="PATRIC" id="fig|272569.17.peg.2447"/>
<dbReference type="eggNOG" id="arCOG00970">
    <property type="taxonomic scope" value="Archaea"/>
</dbReference>
<dbReference type="HOGENOM" id="CLU_035750_7_2_2"/>
<dbReference type="Proteomes" id="UP000001169">
    <property type="component" value="Chromosome I"/>
</dbReference>
<dbReference type="GO" id="GO:0005737">
    <property type="term" value="C:cytoplasm"/>
    <property type="evidence" value="ECO:0007669"/>
    <property type="project" value="UniProtKB-SubCell"/>
</dbReference>
<dbReference type="GO" id="GO:0019774">
    <property type="term" value="C:proteasome core complex, beta-subunit complex"/>
    <property type="evidence" value="ECO:0007669"/>
    <property type="project" value="UniProtKB-UniRule"/>
</dbReference>
<dbReference type="GO" id="GO:0004298">
    <property type="term" value="F:threonine-type endopeptidase activity"/>
    <property type="evidence" value="ECO:0007669"/>
    <property type="project" value="UniProtKB-UniRule"/>
</dbReference>
<dbReference type="GO" id="GO:0010498">
    <property type="term" value="P:proteasomal protein catabolic process"/>
    <property type="evidence" value="ECO:0007669"/>
    <property type="project" value="UniProtKB-UniRule"/>
</dbReference>
<dbReference type="Gene3D" id="3.60.20.10">
    <property type="entry name" value="Glutamine Phosphoribosylpyrophosphate, subunit 1, domain 1"/>
    <property type="match status" value="1"/>
</dbReference>
<dbReference type="HAMAP" id="MF_02113_A">
    <property type="entry name" value="Proteasome_B_A"/>
    <property type="match status" value="1"/>
</dbReference>
<dbReference type="InterPro" id="IPR029055">
    <property type="entry name" value="Ntn_hydrolases_N"/>
</dbReference>
<dbReference type="InterPro" id="IPR019983">
    <property type="entry name" value="Pept_T1A_Psome_bsu_arc"/>
</dbReference>
<dbReference type="InterPro" id="IPR000243">
    <property type="entry name" value="Pept_T1A_subB"/>
</dbReference>
<dbReference type="InterPro" id="IPR001353">
    <property type="entry name" value="Proteasome_sua/b"/>
</dbReference>
<dbReference type="InterPro" id="IPR023333">
    <property type="entry name" value="Proteasome_suB-type"/>
</dbReference>
<dbReference type="NCBIfam" id="TIGR03634">
    <property type="entry name" value="arc_protsome_B"/>
    <property type="match status" value="1"/>
</dbReference>
<dbReference type="PANTHER" id="PTHR32194:SF0">
    <property type="entry name" value="ATP-DEPENDENT PROTEASE SUBUNIT HSLV"/>
    <property type="match status" value="1"/>
</dbReference>
<dbReference type="PANTHER" id="PTHR32194">
    <property type="entry name" value="METALLOPROTEASE TLDD"/>
    <property type="match status" value="1"/>
</dbReference>
<dbReference type="Pfam" id="PF00227">
    <property type="entry name" value="Proteasome"/>
    <property type="match status" value="1"/>
</dbReference>
<dbReference type="PRINTS" id="PR00141">
    <property type="entry name" value="PROTEASOME"/>
</dbReference>
<dbReference type="SUPFAM" id="SSF56235">
    <property type="entry name" value="N-terminal nucleophile aminohydrolases (Ntn hydrolases)"/>
    <property type="match status" value="1"/>
</dbReference>
<dbReference type="PROSITE" id="PS51476">
    <property type="entry name" value="PROTEASOME_BETA_2"/>
    <property type="match status" value="1"/>
</dbReference>
<comment type="function">
    <text evidence="1">Component of the proteasome core, a large protease complex with broad specificity involved in protein degradation.</text>
</comment>
<comment type="catalytic activity">
    <reaction evidence="1">
        <text>Cleavage of peptide bonds with very broad specificity.</text>
        <dbReference type="EC" id="3.4.25.1"/>
    </reaction>
</comment>
<comment type="activity regulation">
    <text evidence="1">The formation of the proteasomal ATPase PAN-20S proteasome complex, via the docking of the C-termini of PAN into the intersubunit pockets in the alpha-rings, triggers opening of the gate for substrate entry. Interconversion between the open-gate and close-gate conformations leads to a dynamic regulation of the 20S proteasome proteolysis activity.</text>
</comment>
<comment type="subunit">
    <text evidence="1">The 20S proteasome core is composed of 14 alpha and 14 beta subunits that assemble into four stacked heptameric rings, resulting in a barrel-shaped structure. The two inner rings, each composed of seven catalytic beta subunits, are sandwiched by two outer rings, each composed of seven alpha subunits. The catalytic chamber with the active sites is on the inside of the barrel. Has a gated structure, the ends of the cylinder being occluded by the N-termini of the alpha-subunits. Is capped at one or both ends by the proteasome regulatory ATPase, PAN.</text>
</comment>
<comment type="subcellular location">
    <subcellularLocation>
        <location evidence="1">Cytoplasm</location>
    </subcellularLocation>
</comment>
<comment type="similarity">
    <text evidence="1">Belongs to the peptidase T1B family.</text>
</comment>
<proteinExistence type="inferred from homology"/>
<evidence type="ECO:0000255" key="1">
    <source>
        <dbReference type="HAMAP-Rule" id="MF_02113"/>
    </source>
</evidence>
<evidence type="ECO:0000256" key="2">
    <source>
        <dbReference type="SAM" id="MobiDB-lite"/>
    </source>
</evidence>
<name>PSB2_HALMA</name>
<sequence length="230" mass="24274">MHDPENRLTDAYEPEVGNLPNEDSGRDEENVVKTGTTTVGLSTEDGVIIATDRRASLGGRFVSNKQVQKVEQIHPTAAMTLVGSVGGAQSFIRSLRAEADLYEVRRDEPLSIHALATLAGNFARGGPYFAINPIVGGVDEEGSHVYSVDPAGGVLEDDYTVTGSGTMVATGTIEGQYDHGMSLSEARDLAIRAVNAAAERDTGSGNGVVLAEITDEGVEIDAFDDYESAE</sequence>
<reference key="1">
    <citation type="journal article" date="2004" name="Genome Res.">
        <title>Genome sequence of Haloarcula marismortui: a halophilic archaeon from the Dead Sea.</title>
        <authorList>
            <person name="Baliga N.S."/>
            <person name="Bonneau R."/>
            <person name="Facciotti M.T."/>
            <person name="Pan M."/>
            <person name="Glusman G."/>
            <person name="Deutsch E.W."/>
            <person name="Shannon P."/>
            <person name="Chiu Y."/>
            <person name="Weng R.S."/>
            <person name="Gan R.R."/>
            <person name="Hung P."/>
            <person name="Date S.V."/>
            <person name="Marcotte E."/>
            <person name="Hood L."/>
            <person name="Ng W.V."/>
        </authorList>
    </citation>
    <scope>NUCLEOTIDE SEQUENCE [LARGE SCALE GENOMIC DNA]</scope>
    <source>
        <strain>ATCC 43049 / DSM 3752 / JCM 8966 / VKM B-1809</strain>
    </source>
</reference>
<accession>Q5V1D5</accession>
<gene>
    <name evidence="1" type="primary">psmB2</name>
    <name type="ordered locus">rrnAC1772</name>
</gene>
<organism>
    <name type="scientific">Haloarcula marismortui (strain ATCC 43049 / DSM 3752 / JCM 8966 / VKM B-1809)</name>
    <name type="common">Halobacterium marismortui</name>
    <dbReference type="NCBI Taxonomy" id="272569"/>
    <lineage>
        <taxon>Archaea</taxon>
        <taxon>Methanobacteriati</taxon>
        <taxon>Methanobacteriota</taxon>
        <taxon>Stenosarchaea group</taxon>
        <taxon>Halobacteria</taxon>
        <taxon>Halobacteriales</taxon>
        <taxon>Haloarculaceae</taxon>
        <taxon>Haloarcula</taxon>
    </lineage>
</organism>